<organism>
    <name type="scientific">Chlorobium luteolum (strain DSM 273 / BCRC 81028 / 2530)</name>
    <name type="common">Pelodictyon luteolum</name>
    <dbReference type="NCBI Taxonomy" id="319225"/>
    <lineage>
        <taxon>Bacteria</taxon>
        <taxon>Pseudomonadati</taxon>
        <taxon>Chlorobiota</taxon>
        <taxon>Chlorobiia</taxon>
        <taxon>Chlorobiales</taxon>
        <taxon>Chlorobiaceae</taxon>
        <taxon>Chlorobium/Pelodictyon group</taxon>
        <taxon>Pelodictyon</taxon>
    </lineage>
</organism>
<keyword id="KW-0067">ATP-binding</keyword>
<keyword id="KW-0997">Cell inner membrane</keyword>
<keyword id="KW-1003">Cell membrane</keyword>
<keyword id="KW-0472">Membrane</keyword>
<keyword id="KW-0547">Nucleotide-binding</keyword>
<keyword id="KW-0592">Phosphate transport</keyword>
<keyword id="KW-1185">Reference proteome</keyword>
<keyword id="KW-1278">Translocase</keyword>
<keyword id="KW-0813">Transport</keyword>
<sequence length="286" mass="31968">MQMTAEEKEISMDTPAKTATRDIYIPSERKSVSGGGKPHVVAKDFSIFYGDFEAVKKVNADILSKYVTAIIGPSGCGKSTFLRAINRMNDLIPSCHTTGTLRFDGEDIYGKLTDEVLLRKKIGMVFQKPNPFPKSIFDNIAYGPRLHGMNDKKQLAEVVEKSLRKAALWDEVSDRLERNALGLSGGQQQRLCVARTLAVEPEILLLDEPTSALDPKATAKIEDLIQELRGSYTIMIVTHNMQQASRVSDYTMFFYEGTLVEHAGTSQLFTNPRDRMTEDYITGRFS</sequence>
<gene>
    <name evidence="1" type="primary">pstB</name>
    <name type="ordered locus">Plut_1242</name>
</gene>
<proteinExistence type="inferred from homology"/>
<dbReference type="EC" id="7.3.2.1" evidence="1"/>
<dbReference type="EMBL" id="CP000096">
    <property type="protein sequence ID" value="ABB24104.1"/>
    <property type="molecule type" value="Genomic_DNA"/>
</dbReference>
<dbReference type="RefSeq" id="WP_011357976.1">
    <property type="nucleotide sequence ID" value="NC_007512.1"/>
</dbReference>
<dbReference type="SMR" id="Q3B3H7"/>
<dbReference type="STRING" id="319225.Plut_1242"/>
<dbReference type="KEGG" id="plt:Plut_1242"/>
<dbReference type="eggNOG" id="COG1117">
    <property type="taxonomic scope" value="Bacteria"/>
</dbReference>
<dbReference type="HOGENOM" id="CLU_000604_1_22_10"/>
<dbReference type="OrthoDB" id="594396at2"/>
<dbReference type="Proteomes" id="UP000002709">
    <property type="component" value="Chromosome"/>
</dbReference>
<dbReference type="GO" id="GO:0005886">
    <property type="term" value="C:plasma membrane"/>
    <property type="evidence" value="ECO:0007669"/>
    <property type="project" value="UniProtKB-SubCell"/>
</dbReference>
<dbReference type="GO" id="GO:0005524">
    <property type="term" value="F:ATP binding"/>
    <property type="evidence" value="ECO:0007669"/>
    <property type="project" value="UniProtKB-KW"/>
</dbReference>
<dbReference type="GO" id="GO:0016887">
    <property type="term" value="F:ATP hydrolysis activity"/>
    <property type="evidence" value="ECO:0007669"/>
    <property type="project" value="InterPro"/>
</dbReference>
<dbReference type="GO" id="GO:0015415">
    <property type="term" value="F:ATPase-coupled phosphate ion transmembrane transporter activity"/>
    <property type="evidence" value="ECO:0007669"/>
    <property type="project" value="UniProtKB-EC"/>
</dbReference>
<dbReference type="GO" id="GO:0035435">
    <property type="term" value="P:phosphate ion transmembrane transport"/>
    <property type="evidence" value="ECO:0007669"/>
    <property type="project" value="InterPro"/>
</dbReference>
<dbReference type="CDD" id="cd03260">
    <property type="entry name" value="ABC_PstB_phosphate_transporter"/>
    <property type="match status" value="1"/>
</dbReference>
<dbReference type="Gene3D" id="3.40.50.300">
    <property type="entry name" value="P-loop containing nucleotide triphosphate hydrolases"/>
    <property type="match status" value="1"/>
</dbReference>
<dbReference type="InterPro" id="IPR003593">
    <property type="entry name" value="AAA+_ATPase"/>
</dbReference>
<dbReference type="InterPro" id="IPR003439">
    <property type="entry name" value="ABC_transporter-like_ATP-bd"/>
</dbReference>
<dbReference type="InterPro" id="IPR017871">
    <property type="entry name" value="ABC_transporter-like_CS"/>
</dbReference>
<dbReference type="InterPro" id="IPR027417">
    <property type="entry name" value="P-loop_NTPase"/>
</dbReference>
<dbReference type="InterPro" id="IPR005670">
    <property type="entry name" value="PstB-like"/>
</dbReference>
<dbReference type="NCBIfam" id="TIGR00972">
    <property type="entry name" value="3a0107s01c2"/>
    <property type="match status" value="1"/>
</dbReference>
<dbReference type="PANTHER" id="PTHR43423">
    <property type="entry name" value="ABC TRANSPORTER I FAMILY MEMBER 17"/>
    <property type="match status" value="1"/>
</dbReference>
<dbReference type="PANTHER" id="PTHR43423:SF1">
    <property type="entry name" value="ABC TRANSPORTER I FAMILY MEMBER 17"/>
    <property type="match status" value="1"/>
</dbReference>
<dbReference type="Pfam" id="PF00005">
    <property type="entry name" value="ABC_tran"/>
    <property type="match status" value="1"/>
</dbReference>
<dbReference type="SMART" id="SM00382">
    <property type="entry name" value="AAA"/>
    <property type="match status" value="1"/>
</dbReference>
<dbReference type="SUPFAM" id="SSF52540">
    <property type="entry name" value="P-loop containing nucleoside triphosphate hydrolases"/>
    <property type="match status" value="1"/>
</dbReference>
<dbReference type="PROSITE" id="PS00211">
    <property type="entry name" value="ABC_TRANSPORTER_1"/>
    <property type="match status" value="1"/>
</dbReference>
<dbReference type="PROSITE" id="PS50893">
    <property type="entry name" value="ABC_TRANSPORTER_2"/>
    <property type="match status" value="1"/>
</dbReference>
<dbReference type="PROSITE" id="PS51238">
    <property type="entry name" value="PSTB"/>
    <property type="match status" value="1"/>
</dbReference>
<feature type="chain" id="PRO_0000272490" description="Phosphate import ATP-binding protein PstB">
    <location>
        <begin position="1"/>
        <end position="286"/>
    </location>
</feature>
<feature type="domain" description="ABC transporter" evidence="1">
    <location>
        <begin position="40"/>
        <end position="281"/>
    </location>
</feature>
<feature type="binding site" evidence="1">
    <location>
        <begin position="72"/>
        <end position="79"/>
    </location>
    <ligand>
        <name>ATP</name>
        <dbReference type="ChEBI" id="CHEBI:30616"/>
    </ligand>
</feature>
<comment type="function">
    <text evidence="1">Part of the ABC transporter complex PstSACB involved in phosphate import. Responsible for energy coupling to the transport system.</text>
</comment>
<comment type="catalytic activity">
    <reaction evidence="1">
        <text>phosphate(out) + ATP + H2O = ADP + 2 phosphate(in) + H(+)</text>
        <dbReference type="Rhea" id="RHEA:24440"/>
        <dbReference type="ChEBI" id="CHEBI:15377"/>
        <dbReference type="ChEBI" id="CHEBI:15378"/>
        <dbReference type="ChEBI" id="CHEBI:30616"/>
        <dbReference type="ChEBI" id="CHEBI:43474"/>
        <dbReference type="ChEBI" id="CHEBI:456216"/>
        <dbReference type="EC" id="7.3.2.1"/>
    </reaction>
</comment>
<comment type="subunit">
    <text evidence="1">The complex is composed of two ATP-binding proteins (PstB), two transmembrane proteins (PstC and PstA) and a solute-binding protein (PstS).</text>
</comment>
<comment type="subcellular location">
    <subcellularLocation>
        <location evidence="1">Cell inner membrane</location>
        <topology evidence="1">Peripheral membrane protein</topology>
    </subcellularLocation>
</comment>
<comment type="similarity">
    <text evidence="1">Belongs to the ABC transporter superfamily. Phosphate importer (TC 3.A.1.7) family.</text>
</comment>
<evidence type="ECO:0000255" key="1">
    <source>
        <dbReference type="HAMAP-Rule" id="MF_01702"/>
    </source>
</evidence>
<accession>Q3B3H7</accession>
<name>PSTB_CHLL3</name>
<protein>
    <recommendedName>
        <fullName evidence="1">Phosphate import ATP-binding protein PstB</fullName>
        <ecNumber evidence="1">7.3.2.1</ecNumber>
    </recommendedName>
    <alternativeName>
        <fullName evidence="1">ABC phosphate transporter</fullName>
    </alternativeName>
    <alternativeName>
        <fullName evidence="1">Phosphate-transporting ATPase</fullName>
    </alternativeName>
</protein>
<reference key="1">
    <citation type="submission" date="2005-08" db="EMBL/GenBank/DDBJ databases">
        <title>Complete sequence of Pelodictyon luteolum DSM 273.</title>
        <authorList>
            <consortium name="US DOE Joint Genome Institute"/>
            <person name="Copeland A."/>
            <person name="Lucas S."/>
            <person name="Lapidus A."/>
            <person name="Barry K."/>
            <person name="Detter J.C."/>
            <person name="Glavina T."/>
            <person name="Hammon N."/>
            <person name="Israni S."/>
            <person name="Pitluck S."/>
            <person name="Bryant D."/>
            <person name="Schmutz J."/>
            <person name="Larimer F."/>
            <person name="Land M."/>
            <person name="Kyrpides N."/>
            <person name="Ivanova N."/>
            <person name="Richardson P."/>
        </authorList>
    </citation>
    <scope>NUCLEOTIDE SEQUENCE [LARGE SCALE GENOMIC DNA]</scope>
    <source>
        <strain>DSM 273 / BCRC 81028 / 2530</strain>
    </source>
</reference>